<accession>Q0I816</accession>
<feature type="chain" id="PRO_1000019993" description="Probable cytosol aminopeptidase">
    <location>
        <begin position="1"/>
        <end position="496"/>
    </location>
</feature>
<feature type="active site" evidence="1">
    <location>
        <position position="269"/>
    </location>
</feature>
<feature type="active site" evidence="1">
    <location>
        <position position="345"/>
    </location>
</feature>
<feature type="binding site" evidence="1">
    <location>
        <position position="257"/>
    </location>
    <ligand>
        <name>Mn(2+)</name>
        <dbReference type="ChEBI" id="CHEBI:29035"/>
        <label>2</label>
    </ligand>
</feature>
<feature type="binding site" evidence="1">
    <location>
        <position position="262"/>
    </location>
    <ligand>
        <name>Mn(2+)</name>
        <dbReference type="ChEBI" id="CHEBI:29035"/>
        <label>1</label>
    </ligand>
</feature>
<feature type="binding site" evidence="1">
    <location>
        <position position="262"/>
    </location>
    <ligand>
        <name>Mn(2+)</name>
        <dbReference type="ChEBI" id="CHEBI:29035"/>
        <label>2</label>
    </ligand>
</feature>
<feature type="binding site" evidence="1">
    <location>
        <position position="281"/>
    </location>
    <ligand>
        <name>Mn(2+)</name>
        <dbReference type="ChEBI" id="CHEBI:29035"/>
        <label>2</label>
    </ligand>
</feature>
<feature type="binding site" evidence="1">
    <location>
        <position position="341"/>
    </location>
    <ligand>
        <name>Mn(2+)</name>
        <dbReference type="ChEBI" id="CHEBI:29035"/>
        <label>1</label>
    </ligand>
</feature>
<feature type="binding site" evidence="1">
    <location>
        <position position="343"/>
    </location>
    <ligand>
        <name>Mn(2+)</name>
        <dbReference type="ChEBI" id="CHEBI:29035"/>
        <label>1</label>
    </ligand>
</feature>
<feature type="binding site" evidence="1">
    <location>
        <position position="343"/>
    </location>
    <ligand>
        <name>Mn(2+)</name>
        <dbReference type="ChEBI" id="CHEBI:29035"/>
        <label>2</label>
    </ligand>
</feature>
<keyword id="KW-0031">Aminopeptidase</keyword>
<keyword id="KW-0963">Cytoplasm</keyword>
<keyword id="KW-0378">Hydrolase</keyword>
<keyword id="KW-0464">Manganese</keyword>
<keyword id="KW-0479">Metal-binding</keyword>
<keyword id="KW-0645">Protease</keyword>
<keyword id="KW-1185">Reference proteome</keyword>
<reference key="1">
    <citation type="journal article" date="2006" name="Proc. Natl. Acad. Sci. U.S.A.">
        <title>Genome sequence of Synechococcus CC9311: insights into adaptation to a coastal environment.</title>
        <authorList>
            <person name="Palenik B."/>
            <person name="Ren Q."/>
            <person name="Dupont C.L."/>
            <person name="Myers G.S."/>
            <person name="Heidelberg J.F."/>
            <person name="Badger J.H."/>
            <person name="Madupu R."/>
            <person name="Nelson W.C."/>
            <person name="Brinkac L.M."/>
            <person name="Dodson R.J."/>
            <person name="Durkin A.S."/>
            <person name="Daugherty S.C."/>
            <person name="Sullivan S.A."/>
            <person name="Khouri H."/>
            <person name="Mohamoud Y."/>
            <person name="Halpin R."/>
            <person name="Paulsen I.T."/>
        </authorList>
    </citation>
    <scope>NUCLEOTIDE SEQUENCE [LARGE SCALE GENOMIC DNA]</scope>
    <source>
        <strain>CC9311</strain>
    </source>
</reference>
<organism>
    <name type="scientific">Synechococcus sp. (strain CC9311)</name>
    <dbReference type="NCBI Taxonomy" id="64471"/>
    <lineage>
        <taxon>Bacteria</taxon>
        <taxon>Bacillati</taxon>
        <taxon>Cyanobacteriota</taxon>
        <taxon>Cyanophyceae</taxon>
        <taxon>Synechococcales</taxon>
        <taxon>Synechococcaceae</taxon>
        <taxon>Synechococcus</taxon>
    </lineage>
</organism>
<evidence type="ECO:0000255" key="1">
    <source>
        <dbReference type="HAMAP-Rule" id="MF_00181"/>
    </source>
</evidence>
<name>AMPA_SYNS3</name>
<dbReference type="EC" id="3.4.11.1" evidence="1"/>
<dbReference type="EC" id="3.4.11.10" evidence="1"/>
<dbReference type="EMBL" id="CP000435">
    <property type="protein sequence ID" value="ABI46555.1"/>
    <property type="molecule type" value="Genomic_DNA"/>
</dbReference>
<dbReference type="RefSeq" id="WP_011620118.1">
    <property type="nucleotide sequence ID" value="NC_008319.1"/>
</dbReference>
<dbReference type="SMR" id="Q0I816"/>
<dbReference type="STRING" id="64471.sync_2208"/>
<dbReference type="MEROPS" id="M17.A01"/>
<dbReference type="KEGG" id="syg:sync_2208"/>
<dbReference type="eggNOG" id="COG0260">
    <property type="taxonomic scope" value="Bacteria"/>
</dbReference>
<dbReference type="HOGENOM" id="CLU_013734_0_1_3"/>
<dbReference type="OrthoDB" id="9809354at2"/>
<dbReference type="Proteomes" id="UP000001961">
    <property type="component" value="Chromosome"/>
</dbReference>
<dbReference type="GO" id="GO:0005737">
    <property type="term" value="C:cytoplasm"/>
    <property type="evidence" value="ECO:0007669"/>
    <property type="project" value="UniProtKB-SubCell"/>
</dbReference>
<dbReference type="GO" id="GO:0030145">
    <property type="term" value="F:manganese ion binding"/>
    <property type="evidence" value="ECO:0007669"/>
    <property type="project" value="UniProtKB-UniRule"/>
</dbReference>
<dbReference type="GO" id="GO:0070006">
    <property type="term" value="F:metalloaminopeptidase activity"/>
    <property type="evidence" value="ECO:0007669"/>
    <property type="project" value="InterPro"/>
</dbReference>
<dbReference type="GO" id="GO:0006508">
    <property type="term" value="P:proteolysis"/>
    <property type="evidence" value="ECO:0007669"/>
    <property type="project" value="UniProtKB-KW"/>
</dbReference>
<dbReference type="CDD" id="cd00433">
    <property type="entry name" value="Peptidase_M17"/>
    <property type="match status" value="1"/>
</dbReference>
<dbReference type="Gene3D" id="3.40.220.10">
    <property type="entry name" value="Leucine Aminopeptidase, subunit E, domain 1"/>
    <property type="match status" value="1"/>
</dbReference>
<dbReference type="Gene3D" id="3.40.630.10">
    <property type="entry name" value="Zn peptidases"/>
    <property type="match status" value="1"/>
</dbReference>
<dbReference type="HAMAP" id="MF_00181">
    <property type="entry name" value="Cytosol_peptidase_M17"/>
    <property type="match status" value="1"/>
</dbReference>
<dbReference type="InterPro" id="IPR011356">
    <property type="entry name" value="Leucine_aapep/pepB"/>
</dbReference>
<dbReference type="InterPro" id="IPR043472">
    <property type="entry name" value="Macro_dom-like"/>
</dbReference>
<dbReference type="InterPro" id="IPR000819">
    <property type="entry name" value="Peptidase_M17_C"/>
</dbReference>
<dbReference type="InterPro" id="IPR023042">
    <property type="entry name" value="Peptidase_M17_leu_NH2_pept"/>
</dbReference>
<dbReference type="InterPro" id="IPR008283">
    <property type="entry name" value="Peptidase_M17_N"/>
</dbReference>
<dbReference type="NCBIfam" id="NF002073">
    <property type="entry name" value="PRK00913.1-2"/>
    <property type="match status" value="1"/>
</dbReference>
<dbReference type="NCBIfam" id="NF002076">
    <property type="entry name" value="PRK00913.2-3"/>
    <property type="match status" value="1"/>
</dbReference>
<dbReference type="PANTHER" id="PTHR11963:SF23">
    <property type="entry name" value="CYTOSOL AMINOPEPTIDASE"/>
    <property type="match status" value="1"/>
</dbReference>
<dbReference type="PANTHER" id="PTHR11963">
    <property type="entry name" value="LEUCINE AMINOPEPTIDASE-RELATED"/>
    <property type="match status" value="1"/>
</dbReference>
<dbReference type="Pfam" id="PF00883">
    <property type="entry name" value="Peptidase_M17"/>
    <property type="match status" value="1"/>
</dbReference>
<dbReference type="Pfam" id="PF02789">
    <property type="entry name" value="Peptidase_M17_N"/>
    <property type="match status" value="1"/>
</dbReference>
<dbReference type="PRINTS" id="PR00481">
    <property type="entry name" value="LAMNOPPTDASE"/>
</dbReference>
<dbReference type="SUPFAM" id="SSF52949">
    <property type="entry name" value="Macro domain-like"/>
    <property type="match status" value="1"/>
</dbReference>
<dbReference type="SUPFAM" id="SSF53187">
    <property type="entry name" value="Zn-dependent exopeptidases"/>
    <property type="match status" value="1"/>
</dbReference>
<dbReference type="PROSITE" id="PS00631">
    <property type="entry name" value="CYTOSOL_AP"/>
    <property type="match status" value="1"/>
</dbReference>
<comment type="function">
    <text evidence="1">Presumably involved in the processing and regular turnover of intracellular proteins. Catalyzes the removal of unsubstituted N-terminal amino acids from various peptides.</text>
</comment>
<comment type="catalytic activity">
    <reaction evidence="1">
        <text>Release of an N-terminal amino acid, Xaa-|-Yaa-, in which Xaa is preferably Leu, but may be other amino acids including Pro although not Arg or Lys, and Yaa may be Pro. Amino acid amides and methyl esters are also readily hydrolyzed, but rates on arylamides are exceedingly low.</text>
        <dbReference type="EC" id="3.4.11.1"/>
    </reaction>
</comment>
<comment type="catalytic activity">
    <reaction evidence="1">
        <text>Release of an N-terminal amino acid, preferentially leucine, but not glutamic or aspartic acids.</text>
        <dbReference type="EC" id="3.4.11.10"/>
    </reaction>
</comment>
<comment type="cofactor">
    <cofactor evidence="1">
        <name>Mn(2+)</name>
        <dbReference type="ChEBI" id="CHEBI:29035"/>
    </cofactor>
    <text evidence="1">Binds 2 manganese ions per subunit.</text>
</comment>
<comment type="subcellular location">
    <subcellularLocation>
        <location evidence="1">Cytoplasm</location>
    </subcellularLocation>
</comment>
<comment type="similarity">
    <text evidence="1">Belongs to the peptidase M17 family.</text>
</comment>
<protein>
    <recommendedName>
        <fullName evidence="1">Probable cytosol aminopeptidase</fullName>
        <ecNumber evidence="1">3.4.11.1</ecNumber>
    </recommendedName>
    <alternativeName>
        <fullName evidence="1">Leucine aminopeptidase</fullName>
        <shortName evidence="1">LAP</shortName>
        <ecNumber evidence="1">3.4.11.10</ecNumber>
    </alternativeName>
    <alternativeName>
        <fullName evidence="1">Leucyl aminopeptidase</fullName>
    </alternativeName>
</protein>
<proteinExistence type="inferred from homology"/>
<gene>
    <name evidence="1" type="primary">pepA</name>
    <name type="ordered locus">sync_2208</name>
</gene>
<sequence>MQISLSSAQPQAWSGTVLALGIAEGDPNGWIPAMEERFSISLGDWLEQRKFQGKNGESASLQLLNPNCESLVLIGLGPLEALDVNSFRQAGAAAARASKNQTGSIGLLLPWNAVDPAEAVTVAAQAVRLALYSDQRFRSKPEPSIHPERLELLGPLPNTLSSALEAVHPICAGVELARELVAAPPNSVTPSALAESAAQMAHEHGLDLKVLERSDCEARGMGSFLSVCQGSDMDPKFIHLTYRPSGPATKRVVLVGKGLTFDSGGYNLKVGAAQIDMMKFDMGGSAAVLGAMRSIAELRPQGVEVHMLVASCENMINGSAVHPGDIVTASNGTTIEINNTDAEGRLTLADALVYASELEPDAIVDLATLTGACVIALGDEIAGLWTGDDSLANSLEGAAKDAGEGLWRMPMHQAYRKGLKSLLADLKNTGPRPGGSITAALFLKEFVRSSIPWAHIDIAGTVWSDKGRGMDPAGATGYGVRTLVSWVCAQTQQAEN</sequence>